<name>ARPC2_CAEEL</name>
<protein>
    <recommendedName>
        <fullName>Probable actin-related protein 2/3 complex subunit 2</fullName>
    </recommendedName>
    <alternativeName>
        <fullName>Arp2/3 complex 34 kDa subunit</fullName>
        <shortName>p34-ARC</shortName>
    </alternativeName>
</protein>
<keyword id="KW-0009">Actin-binding</keyword>
<keyword id="KW-0963">Cytoplasm</keyword>
<keyword id="KW-0206">Cytoskeleton</keyword>
<keyword id="KW-1185">Reference proteome</keyword>
<proteinExistence type="evidence at protein level"/>
<dbReference type="EMBL" id="BX284603">
    <property type="protein sequence ID" value="CCD72538.1"/>
    <property type="molecule type" value="Genomic_DNA"/>
</dbReference>
<dbReference type="RefSeq" id="NP_001370783.1">
    <property type="nucleotide sequence ID" value="NM_001384017.1"/>
</dbReference>
<dbReference type="RefSeq" id="NP_741088.1">
    <property type="nucleotide sequence ID" value="NM_171077.5"/>
</dbReference>
<dbReference type="SMR" id="Q8WTM6"/>
<dbReference type="BioGRID" id="40516">
    <property type="interactions" value="8"/>
</dbReference>
<dbReference type="FunCoup" id="Q8WTM6">
    <property type="interactions" value="2513"/>
</dbReference>
<dbReference type="STRING" id="6239.Y6D11A.2.1"/>
<dbReference type="PaxDb" id="6239-Y6D11A.2"/>
<dbReference type="PeptideAtlas" id="Q8WTM6"/>
<dbReference type="EnsemblMetazoa" id="Y6D11A.2.1">
    <property type="protein sequence ID" value="Y6D11A.2.1"/>
    <property type="gene ID" value="WBGene00021170"/>
</dbReference>
<dbReference type="GeneID" id="175247"/>
<dbReference type="UCSC" id="Y6D11A.2">
    <property type="organism name" value="c. elegans"/>
</dbReference>
<dbReference type="AGR" id="WB:WBGene00021170"/>
<dbReference type="WormBase" id="Y6D11A.2">
    <property type="protein sequence ID" value="CE30060"/>
    <property type="gene ID" value="WBGene00021170"/>
    <property type="gene designation" value="arx-4"/>
</dbReference>
<dbReference type="eggNOG" id="KOG2826">
    <property type="taxonomic scope" value="Eukaryota"/>
</dbReference>
<dbReference type="GeneTree" id="ENSGT00390000016794"/>
<dbReference type="HOGENOM" id="CLU_059439_1_0_1"/>
<dbReference type="InParanoid" id="Q8WTM6"/>
<dbReference type="OMA" id="FRSYFHY"/>
<dbReference type="OrthoDB" id="148331at2759"/>
<dbReference type="PhylomeDB" id="Q8WTM6"/>
<dbReference type="Reactome" id="R-CEL-2029482">
    <property type="pathway name" value="Regulation of actin dynamics for phagocytic cup formation"/>
</dbReference>
<dbReference type="Reactome" id="R-CEL-3928662">
    <property type="pathway name" value="EPHB-mediated forward signaling"/>
</dbReference>
<dbReference type="Reactome" id="R-CEL-5663213">
    <property type="pathway name" value="RHO GTPases Activate WASPs and WAVEs"/>
</dbReference>
<dbReference type="Reactome" id="R-CEL-8856828">
    <property type="pathway name" value="Clathrin-mediated endocytosis"/>
</dbReference>
<dbReference type="PRO" id="PR:Q8WTM6"/>
<dbReference type="Proteomes" id="UP000001940">
    <property type="component" value="Chromosome III"/>
</dbReference>
<dbReference type="Bgee" id="WBGene00021170">
    <property type="expression patterns" value="Expressed in germ line (C elegans) and 4 other cell types or tissues"/>
</dbReference>
<dbReference type="GO" id="GO:0005885">
    <property type="term" value="C:Arp2/3 protein complex"/>
    <property type="evidence" value="ECO:0000318"/>
    <property type="project" value="GO_Central"/>
</dbReference>
<dbReference type="GO" id="GO:0005737">
    <property type="term" value="C:cytoplasm"/>
    <property type="evidence" value="ECO:0007669"/>
    <property type="project" value="UniProtKB-KW"/>
</dbReference>
<dbReference type="GO" id="GO:0051015">
    <property type="term" value="F:actin filament binding"/>
    <property type="evidence" value="ECO:0000318"/>
    <property type="project" value="GO_Central"/>
</dbReference>
<dbReference type="GO" id="GO:0005200">
    <property type="term" value="F:structural constituent of cytoskeleton"/>
    <property type="evidence" value="ECO:0000318"/>
    <property type="project" value="GO_Central"/>
</dbReference>
<dbReference type="GO" id="GO:0030041">
    <property type="term" value="P:actin filament polymerization"/>
    <property type="evidence" value="ECO:0007669"/>
    <property type="project" value="InterPro"/>
</dbReference>
<dbReference type="GO" id="GO:0034314">
    <property type="term" value="P:Arp2/3 complex-mediated actin nucleation"/>
    <property type="evidence" value="ECO:0000318"/>
    <property type="project" value="GO_Central"/>
</dbReference>
<dbReference type="GO" id="GO:0010631">
    <property type="term" value="P:epithelial cell migration"/>
    <property type="evidence" value="ECO:0000315"/>
    <property type="project" value="WormBase"/>
</dbReference>
<dbReference type="GO" id="GO:0016331">
    <property type="term" value="P:morphogenesis of embryonic epithelium"/>
    <property type="evidence" value="ECO:0000315"/>
    <property type="project" value="WormBase"/>
</dbReference>
<dbReference type="FunFam" id="3.30.1460.20:FF:000002">
    <property type="entry name" value="Arp2/3 complex 34 kDa subunit"/>
    <property type="match status" value="1"/>
</dbReference>
<dbReference type="FunFam" id="3.30.1460.20:FF:000004">
    <property type="entry name" value="Arp2/3 complex 34 kDa subunit"/>
    <property type="match status" value="1"/>
</dbReference>
<dbReference type="Gene3D" id="3.30.1460.20">
    <property type="match status" value="2"/>
</dbReference>
<dbReference type="InterPro" id="IPR007188">
    <property type="entry name" value="ARPC2"/>
</dbReference>
<dbReference type="InterPro" id="IPR034666">
    <property type="entry name" value="ARPC2/4"/>
</dbReference>
<dbReference type="PANTHER" id="PTHR12058:SF0">
    <property type="entry name" value="ACTIN-RELATED PROTEIN 2_3 COMPLEX SUBUNIT 2"/>
    <property type="match status" value="1"/>
</dbReference>
<dbReference type="PANTHER" id="PTHR12058">
    <property type="entry name" value="ARP2/3 COMPLEX 34 KDA SUBUNIT"/>
    <property type="match status" value="1"/>
</dbReference>
<dbReference type="Pfam" id="PF04045">
    <property type="entry name" value="P34-Arc"/>
    <property type="match status" value="1"/>
</dbReference>
<dbReference type="SUPFAM" id="SSF69645">
    <property type="entry name" value="Arp2/3 complex subunits"/>
    <property type="match status" value="2"/>
</dbReference>
<sequence length="301" mass="34480">MIILEQNNRIIVELLEQKFANAKEGGKPESVNVTFADFDGVLYKLSNPDGDRTKIILSISLKFYTELQQHGADDLLRRVYGGHMRSTPEQGFNVTLEYNLADLPADTTDLVQAASALKRNCFASVFEKYFEFQEAGQEGHKRAVINYRDDETMYIEAKADRVTVIFSTVFKDADDVIIGKVFLQEFREGRKASQTAPAVLYSLGEPPLELKDLPEARVGDNVGYITFVLFPRHTNKKTKDNTIDLIHSFRDYLHYHIKCSKVYLHTRMRAKTTDFLKVLNRARPEVKGEKKTFHGRTFQTQ</sequence>
<organism>
    <name type="scientific">Caenorhabditis elegans</name>
    <dbReference type="NCBI Taxonomy" id="6239"/>
    <lineage>
        <taxon>Eukaryota</taxon>
        <taxon>Metazoa</taxon>
        <taxon>Ecdysozoa</taxon>
        <taxon>Nematoda</taxon>
        <taxon>Chromadorea</taxon>
        <taxon>Rhabditida</taxon>
        <taxon>Rhabditina</taxon>
        <taxon>Rhabditomorpha</taxon>
        <taxon>Rhabditoidea</taxon>
        <taxon>Rhabditidae</taxon>
        <taxon>Peloderinae</taxon>
        <taxon>Caenorhabditis</taxon>
    </lineage>
</organism>
<reference key="1">
    <citation type="journal article" date="1998" name="Science">
        <title>Genome sequence of the nematode C. elegans: a platform for investigating biology.</title>
        <authorList>
            <consortium name="The C. elegans sequencing consortium"/>
        </authorList>
    </citation>
    <scope>NUCLEOTIDE SEQUENCE [LARGE SCALE GENOMIC DNA]</scope>
    <source>
        <strain>Bristol N2</strain>
    </source>
</reference>
<reference key="2">
    <citation type="journal article" date="2014" name="Cell">
        <title>Forgetting is regulated via Musashi-mediated translational control of the Arp2/3 complex.</title>
        <authorList>
            <person name="Hadziselimovic N."/>
            <person name="Vukojevic V."/>
            <person name="Peter F."/>
            <person name="Milnik A."/>
            <person name="Fastenrath M."/>
            <person name="Fenyves B.G."/>
            <person name="Hieber P."/>
            <person name="Demougin P."/>
            <person name="Vogler C."/>
            <person name="de Quervain D.J."/>
            <person name="Papassotiropoulos A."/>
            <person name="Stetak A."/>
        </authorList>
    </citation>
    <scope>FUNCTION</scope>
    <scope>IDENTIFICATION IN ARP2/3 COMPLEX</scope>
    <scope>DISRUPTION PHENOTYPE</scope>
</reference>
<comment type="function">
    <text evidence="1 2">Functions as actin-binding component of the Arp2/3 complex which is involved in regulation of actin polymerization and together with an activating nucleation-promoting factor (NPF) mediates the formation of branched actin networks. Seems to contact the mother actin filament (By similarity). Plays a role in time-dependent memory loss and the retention of conditioned behavior over time (PubMed:24630719).</text>
</comment>
<comment type="subunit">
    <text evidence="4">Component of the Arp2/3 complex, at least composed of arx-1, arx-2, arx-4 and arx-6.</text>
</comment>
<comment type="subcellular location">
    <subcellularLocation>
        <location evidence="1">Cytoplasm</location>
        <location evidence="1">Cytoskeleton</location>
    </subcellularLocation>
</comment>
<comment type="disruption phenotype">
    <text evidence="2">RNAi-mediated knockdown suppresses the memory retention defects of the msi-1 os1 loss of function mutant.</text>
</comment>
<comment type="similarity">
    <text evidence="3">Belongs to the ARPC2 family.</text>
</comment>
<evidence type="ECO:0000250" key="1"/>
<evidence type="ECO:0000269" key="2">
    <source>
    </source>
</evidence>
<evidence type="ECO:0000305" key="3"/>
<evidence type="ECO:0000305" key="4">
    <source>
    </source>
</evidence>
<evidence type="ECO:0000312" key="5">
    <source>
        <dbReference type="WormBase" id="Y6D11A.2"/>
    </source>
</evidence>
<accession>Q8WTM6</accession>
<feature type="chain" id="PRO_0000124037" description="Probable actin-related protein 2/3 complex subunit 2">
    <location>
        <begin position="1"/>
        <end position="301"/>
    </location>
</feature>
<gene>
    <name evidence="5" type="primary">arx-4</name>
    <name evidence="5" type="ORF">Y6D11A.2</name>
</gene>